<keyword id="KW-0066">ATP synthesis</keyword>
<keyword id="KW-0139">CF(1)</keyword>
<keyword id="KW-0150">Chloroplast</keyword>
<keyword id="KW-0375">Hydrogen ion transport</keyword>
<keyword id="KW-0406">Ion transport</keyword>
<keyword id="KW-0472">Membrane</keyword>
<keyword id="KW-0934">Plastid</keyword>
<keyword id="KW-1185">Reference proteome</keyword>
<keyword id="KW-0793">Thylakoid</keyword>
<keyword id="KW-0813">Transport</keyword>
<proteinExistence type="inferred from homology"/>
<feature type="chain" id="PRO_0000275223" description="ATP synthase epsilon chain, chloroplastic">
    <location>
        <begin position="1"/>
        <end position="133"/>
    </location>
</feature>
<accession>Q0ZJ14</accession>
<comment type="function">
    <text evidence="1">Produces ATP from ADP in the presence of a proton gradient across the membrane.</text>
</comment>
<comment type="subunit">
    <text evidence="1">F-type ATPases have 2 components, CF(1) - the catalytic core - and CF(0) - the membrane proton channel. CF(1) has five subunits: alpha(3), beta(3), gamma(1), delta(1), epsilon(1). CF(0) has three main subunits: a, b and c.</text>
</comment>
<comment type="subcellular location">
    <subcellularLocation>
        <location evidence="1">Plastid</location>
        <location evidence="1">Chloroplast thylakoid membrane</location>
        <topology evidence="1">Peripheral membrane protein</topology>
    </subcellularLocation>
</comment>
<comment type="similarity">
    <text evidence="1">Belongs to the ATPase epsilon chain family.</text>
</comment>
<evidence type="ECO:0000255" key="1">
    <source>
        <dbReference type="HAMAP-Rule" id="MF_00530"/>
    </source>
</evidence>
<name>ATPE_VITVI</name>
<reference key="1">
    <citation type="journal article" date="2006" name="BMC Evol. Biol.">
        <title>Phylogenetic analyses of Vitis (Vitaceae) based on complete chloroplast genome sequences: effects of taxon sampling and phylogenetic methods on resolving relationships among rosids.</title>
        <authorList>
            <person name="Jansen R.K."/>
            <person name="Kaittanis C."/>
            <person name="Lee S.-B."/>
            <person name="Saski C."/>
            <person name="Tomkins J."/>
            <person name="Alverson A.J."/>
            <person name="Daniell H."/>
        </authorList>
    </citation>
    <scope>NUCLEOTIDE SEQUENCE [LARGE SCALE GENOMIC DNA]</scope>
    <source>
        <strain>cv. Maxxa</strain>
    </source>
</reference>
<protein>
    <recommendedName>
        <fullName evidence="1">ATP synthase epsilon chain, chloroplastic</fullName>
    </recommendedName>
    <alternativeName>
        <fullName evidence="1">ATP synthase F1 sector epsilon subunit</fullName>
    </alternativeName>
    <alternativeName>
        <fullName evidence="1">F-ATPase epsilon subunit</fullName>
    </alternativeName>
</protein>
<sequence>MTLNLCVLTPNRIVWDSKVKEIILSTNSGQIGILPNHAPIATAVDIGILRIRLNDQWLTMALMGGFARIGNNEITVLVNDAEKGSDIEPQEAQQTLEIAEANLRKAEGKRQIIEANLALRRARTRVEAINVTS</sequence>
<geneLocation type="chloroplast"/>
<dbReference type="EMBL" id="DQ424856">
    <property type="protein sequence ID" value="ABE47540.1"/>
    <property type="molecule type" value="Genomic_DNA"/>
</dbReference>
<dbReference type="RefSeq" id="YP_567082.1">
    <property type="nucleotide sequence ID" value="NC_007957.1"/>
</dbReference>
<dbReference type="SMR" id="Q0ZJ14"/>
<dbReference type="FunCoup" id="Q0ZJ14">
    <property type="interactions" value="290"/>
</dbReference>
<dbReference type="STRING" id="29760.Q0ZJ14"/>
<dbReference type="PaxDb" id="29760-VIT_19s0085g00110.t01"/>
<dbReference type="GeneID" id="4025007"/>
<dbReference type="KEGG" id="vvi:4025007"/>
<dbReference type="eggNOG" id="KOG0055">
    <property type="taxonomic scope" value="Eukaryota"/>
</dbReference>
<dbReference type="eggNOG" id="KOG1758">
    <property type="taxonomic scope" value="Eukaryota"/>
</dbReference>
<dbReference type="InParanoid" id="Q0ZJ14"/>
<dbReference type="OrthoDB" id="802542at71240"/>
<dbReference type="Proteomes" id="UP000009183">
    <property type="component" value="Chloroplast"/>
</dbReference>
<dbReference type="ExpressionAtlas" id="Q0ZJ14">
    <property type="expression patterns" value="baseline"/>
</dbReference>
<dbReference type="GO" id="GO:0009535">
    <property type="term" value="C:chloroplast thylakoid membrane"/>
    <property type="evidence" value="ECO:0007669"/>
    <property type="project" value="UniProtKB-SubCell"/>
</dbReference>
<dbReference type="GO" id="GO:0045259">
    <property type="term" value="C:proton-transporting ATP synthase complex"/>
    <property type="evidence" value="ECO:0007669"/>
    <property type="project" value="UniProtKB-KW"/>
</dbReference>
<dbReference type="GO" id="GO:0005524">
    <property type="term" value="F:ATP binding"/>
    <property type="evidence" value="ECO:0007669"/>
    <property type="project" value="UniProtKB-UniRule"/>
</dbReference>
<dbReference type="GO" id="GO:0046933">
    <property type="term" value="F:proton-transporting ATP synthase activity, rotational mechanism"/>
    <property type="evidence" value="ECO:0007669"/>
    <property type="project" value="UniProtKB-UniRule"/>
</dbReference>
<dbReference type="GO" id="GO:0015986">
    <property type="term" value="P:proton motive force-driven ATP synthesis"/>
    <property type="evidence" value="ECO:0000318"/>
    <property type="project" value="GO_Central"/>
</dbReference>
<dbReference type="CDD" id="cd12152">
    <property type="entry name" value="F1-ATPase_delta"/>
    <property type="match status" value="1"/>
</dbReference>
<dbReference type="FunFam" id="2.60.15.10:FF:000002">
    <property type="entry name" value="ATP synthase epsilon chain, chloroplastic"/>
    <property type="match status" value="1"/>
</dbReference>
<dbReference type="Gene3D" id="6.10.140.480">
    <property type="match status" value="1"/>
</dbReference>
<dbReference type="Gene3D" id="2.60.15.10">
    <property type="entry name" value="F0F1 ATP synthase delta/epsilon subunit, N-terminal"/>
    <property type="match status" value="1"/>
</dbReference>
<dbReference type="HAMAP" id="MF_00530">
    <property type="entry name" value="ATP_synth_epsil_bac"/>
    <property type="match status" value="1"/>
</dbReference>
<dbReference type="InterPro" id="IPR001469">
    <property type="entry name" value="ATP_synth_F1_dsu/esu"/>
</dbReference>
<dbReference type="InterPro" id="IPR020546">
    <property type="entry name" value="ATP_synth_F1_dsu/esu_N"/>
</dbReference>
<dbReference type="InterPro" id="IPR020547">
    <property type="entry name" value="ATP_synth_F1_esu_C"/>
</dbReference>
<dbReference type="InterPro" id="IPR036771">
    <property type="entry name" value="ATPsynth_dsu/esu_N"/>
</dbReference>
<dbReference type="NCBIfam" id="TIGR01216">
    <property type="entry name" value="ATP_synt_epsi"/>
    <property type="match status" value="1"/>
</dbReference>
<dbReference type="PANTHER" id="PTHR13822">
    <property type="entry name" value="ATP SYNTHASE DELTA/EPSILON CHAIN"/>
    <property type="match status" value="1"/>
</dbReference>
<dbReference type="PANTHER" id="PTHR13822:SF10">
    <property type="entry name" value="ATP SYNTHASE EPSILON CHAIN, CHLOROPLASTIC"/>
    <property type="match status" value="1"/>
</dbReference>
<dbReference type="Pfam" id="PF00401">
    <property type="entry name" value="ATP-synt_DE"/>
    <property type="match status" value="1"/>
</dbReference>
<dbReference type="Pfam" id="PF02823">
    <property type="entry name" value="ATP-synt_DE_N"/>
    <property type="match status" value="1"/>
</dbReference>
<dbReference type="SUPFAM" id="SSF51344">
    <property type="entry name" value="Epsilon subunit of F1F0-ATP synthase N-terminal domain"/>
    <property type="match status" value="1"/>
</dbReference>
<organism>
    <name type="scientific">Vitis vinifera</name>
    <name type="common">Grape</name>
    <dbReference type="NCBI Taxonomy" id="29760"/>
    <lineage>
        <taxon>Eukaryota</taxon>
        <taxon>Viridiplantae</taxon>
        <taxon>Streptophyta</taxon>
        <taxon>Embryophyta</taxon>
        <taxon>Tracheophyta</taxon>
        <taxon>Spermatophyta</taxon>
        <taxon>Magnoliopsida</taxon>
        <taxon>eudicotyledons</taxon>
        <taxon>Gunneridae</taxon>
        <taxon>Pentapetalae</taxon>
        <taxon>rosids</taxon>
        <taxon>Vitales</taxon>
        <taxon>Vitaceae</taxon>
        <taxon>Viteae</taxon>
        <taxon>Vitis</taxon>
    </lineage>
</organism>
<gene>
    <name evidence="1" type="primary">atpE</name>
</gene>